<dbReference type="EMBL" id="EF044213">
    <property type="protein sequence ID" value="ABJ89716.1"/>
    <property type="molecule type" value="Genomic_DNA"/>
</dbReference>
<dbReference type="RefSeq" id="YP_817520.1">
    <property type="nucleotide sequence ID" value="NC_008535.1"/>
</dbReference>
<dbReference type="SMR" id="A0A373"/>
<dbReference type="GeneID" id="4421817"/>
<dbReference type="OrthoDB" id="1850746at2759"/>
<dbReference type="Proteomes" id="UP000515148">
    <property type="component" value="Chloroplast Pltd"/>
</dbReference>
<dbReference type="GO" id="GO:0009507">
    <property type="term" value="C:chloroplast"/>
    <property type="evidence" value="ECO:0007669"/>
    <property type="project" value="UniProtKB-SubCell"/>
</dbReference>
<dbReference type="GO" id="GO:0005762">
    <property type="term" value="C:mitochondrial large ribosomal subunit"/>
    <property type="evidence" value="ECO:0007669"/>
    <property type="project" value="TreeGrafter"/>
</dbReference>
<dbReference type="GO" id="GO:0019843">
    <property type="term" value="F:rRNA binding"/>
    <property type="evidence" value="ECO:0007669"/>
    <property type="project" value="InterPro"/>
</dbReference>
<dbReference type="GO" id="GO:0003735">
    <property type="term" value="F:structural constituent of ribosome"/>
    <property type="evidence" value="ECO:0007669"/>
    <property type="project" value="InterPro"/>
</dbReference>
<dbReference type="GO" id="GO:0032543">
    <property type="term" value="P:mitochondrial translation"/>
    <property type="evidence" value="ECO:0007669"/>
    <property type="project" value="TreeGrafter"/>
</dbReference>
<dbReference type="CDD" id="cd01433">
    <property type="entry name" value="Ribosomal_L16_L10e"/>
    <property type="match status" value="1"/>
</dbReference>
<dbReference type="FunFam" id="3.90.1170.10:FF:000001">
    <property type="entry name" value="50S ribosomal protein L16"/>
    <property type="match status" value="1"/>
</dbReference>
<dbReference type="Gene3D" id="3.90.1170.10">
    <property type="entry name" value="Ribosomal protein L10e/L16"/>
    <property type="match status" value="1"/>
</dbReference>
<dbReference type="HAMAP" id="MF_01342">
    <property type="entry name" value="Ribosomal_uL16"/>
    <property type="match status" value="1"/>
</dbReference>
<dbReference type="InterPro" id="IPR047873">
    <property type="entry name" value="Ribosomal_uL16"/>
</dbReference>
<dbReference type="InterPro" id="IPR000114">
    <property type="entry name" value="Ribosomal_uL16_bact-type"/>
</dbReference>
<dbReference type="InterPro" id="IPR020798">
    <property type="entry name" value="Ribosomal_uL16_CS"/>
</dbReference>
<dbReference type="InterPro" id="IPR016180">
    <property type="entry name" value="Ribosomal_uL16_dom"/>
</dbReference>
<dbReference type="InterPro" id="IPR036920">
    <property type="entry name" value="Ribosomal_uL16_sf"/>
</dbReference>
<dbReference type="NCBIfam" id="TIGR01164">
    <property type="entry name" value="rplP_bact"/>
    <property type="match status" value="1"/>
</dbReference>
<dbReference type="PANTHER" id="PTHR12220">
    <property type="entry name" value="50S/60S RIBOSOMAL PROTEIN L16"/>
    <property type="match status" value="1"/>
</dbReference>
<dbReference type="PANTHER" id="PTHR12220:SF13">
    <property type="entry name" value="LARGE RIBOSOMAL SUBUNIT PROTEIN UL16M"/>
    <property type="match status" value="1"/>
</dbReference>
<dbReference type="Pfam" id="PF00252">
    <property type="entry name" value="Ribosomal_L16"/>
    <property type="match status" value="1"/>
</dbReference>
<dbReference type="PRINTS" id="PR00060">
    <property type="entry name" value="RIBOSOMALL16"/>
</dbReference>
<dbReference type="SUPFAM" id="SSF54686">
    <property type="entry name" value="Ribosomal protein L16p/L10e"/>
    <property type="match status" value="1"/>
</dbReference>
<dbReference type="PROSITE" id="PS00586">
    <property type="entry name" value="RIBOSOMAL_L16_1"/>
    <property type="match status" value="1"/>
</dbReference>
<dbReference type="PROSITE" id="PS00701">
    <property type="entry name" value="RIBOSOMAL_L16_2"/>
    <property type="match status" value="1"/>
</dbReference>
<accession>A0A373</accession>
<name>RK16_COFAR</name>
<protein>
    <recommendedName>
        <fullName evidence="1">Large ribosomal subunit protein uL16c</fullName>
    </recommendedName>
    <alternativeName>
        <fullName evidence="2">50S ribosomal protein L16, chloroplastic</fullName>
    </alternativeName>
</protein>
<comment type="subunit">
    <text evidence="1">Part of the 50S ribosomal subunit.</text>
</comment>
<comment type="subcellular location">
    <subcellularLocation>
        <location>Plastid</location>
        <location>Chloroplast</location>
    </subcellularLocation>
</comment>
<comment type="similarity">
    <text evidence="1">Belongs to the universal ribosomal protein uL16 family.</text>
</comment>
<keyword id="KW-0150">Chloroplast</keyword>
<keyword id="KW-0934">Plastid</keyword>
<keyword id="KW-1185">Reference proteome</keyword>
<keyword id="KW-0687">Ribonucleoprotein</keyword>
<keyword id="KW-0689">Ribosomal protein</keyword>
<feature type="chain" id="PRO_0000276380" description="Large ribosomal subunit protein uL16c">
    <location>
        <begin position="1"/>
        <end position="135"/>
    </location>
</feature>
<evidence type="ECO:0000255" key="1">
    <source>
        <dbReference type="HAMAP-Rule" id="MF_01342"/>
    </source>
</evidence>
<evidence type="ECO:0000305" key="2"/>
<proteinExistence type="inferred from homology"/>
<geneLocation type="chloroplast"/>
<sequence>MLSPKRTRFRKQHRGRMKGISYRGNRICFGKFALQALEPAWITSRQIEAGRRAMTRNVRRGGKIWVRIFPDKPITARPAETRMGSGKGSPEYWVAVVKPGRILYEMGGVTEHIARRAISIAASKMPIRTQFIISR</sequence>
<reference key="1">
    <citation type="journal article" date="2007" name="Plant Biotechnol. J.">
        <title>The complete nucleotide sequence of the coffee (Coffea arabica L.) chloroplast genome: organization and implications for biotechnology and phylogenetic relationships amongst angiosperms.</title>
        <authorList>
            <person name="Samson N."/>
            <person name="Bausher M.G."/>
            <person name="Lee S.-B."/>
            <person name="Jansen R.K."/>
            <person name="Daniell H."/>
        </authorList>
    </citation>
    <scope>NUCLEOTIDE SEQUENCE [LARGE SCALE GENOMIC DNA]</scope>
</reference>
<organism>
    <name type="scientific">Coffea arabica</name>
    <name type="common">Arabian coffee</name>
    <dbReference type="NCBI Taxonomy" id="13443"/>
    <lineage>
        <taxon>Eukaryota</taxon>
        <taxon>Viridiplantae</taxon>
        <taxon>Streptophyta</taxon>
        <taxon>Embryophyta</taxon>
        <taxon>Tracheophyta</taxon>
        <taxon>Spermatophyta</taxon>
        <taxon>Magnoliopsida</taxon>
        <taxon>eudicotyledons</taxon>
        <taxon>Gunneridae</taxon>
        <taxon>Pentapetalae</taxon>
        <taxon>asterids</taxon>
        <taxon>lamiids</taxon>
        <taxon>Gentianales</taxon>
        <taxon>Rubiaceae</taxon>
        <taxon>Ixoroideae</taxon>
        <taxon>Gardenieae complex</taxon>
        <taxon>Bertiereae - Coffeeae clade</taxon>
        <taxon>Coffeeae</taxon>
        <taxon>Coffea</taxon>
    </lineage>
</organism>
<gene>
    <name evidence="1" type="primary">rpl16</name>
</gene>